<name>ADC1A_TOBAC</name>
<feature type="transit peptide" description="Chloroplast" evidence="6">
    <location>
        <begin position="1"/>
        <end position="44"/>
    </location>
</feature>
<feature type="chain" id="PRO_0000455779" description="Arginine decarboxylase 1A, chloroplastic">
    <location>
        <begin position="45"/>
        <end position="733"/>
    </location>
</feature>
<feature type="active site" description="Proton donor; shared with dimeric partner" evidence="3">
    <location>
        <position position="548"/>
    </location>
</feature>
<feature type="binding site" evidence="3">
    <location>
        <position position="309"/>
    </location>
    <ligand>
        <name>pyridoxal 5'-phosphate</name>
        <dbReference type="ChEBI" id="CHEBI:597326"/>
    </ligand>
</feature>
<feature type="binding site" evidence="3">
    <location>
        <position position="346"/>
    </location>
    <ligand>
        <name>pyridoxal 5'-phosphate</name>
        <dbReference type="ChEBI" id="CHEBI:597326"/>
    </ligand>
</feature>
<feature type="binding site" evidence="3">
    <location>
        <begin position="395"/>
        <end position="398"/>
    </location>
    <ligand>
        <name>pyridoxal 5'-phosphate</name>
        <dbReference type="ChEBI" id="CHEBI:597326"/>
    </ligand>
</feature>
<feature type="binding site" description="in other chain" evidence="2">
    <location>
        <begin position="460"/>
        <end position="461"/>
    </location>
    <ligand>
        <name>substrate</name>
        <note>ligand shared between dimeric partners</note>
    </ligand>
</feature>
<feature type="binding site" evidence="2">
    <location>
        <position position="549"/>
    </location>
    <ligand>
        <name>substrate</name>
        <note>ligand shared between dimeric partners</note>
    </ligand>
</feature>
<feature type="binding site" evidence="3">
    <location>
        <position position="592"/>
    </location>
    <ligand>
        <name>pyridoxal 5'-phosphate</name>
        <dbReference type="ChEBI" id="CHEBI:597326"/>
    </ligand>
</feature>
<feature type="site" description="Stacks against the aromatic ring of pyridoxal phosphate and stabilizes reaction intermediates" evidence="1">
    <location>
        <position position="306"/>
    </location>
</feature>
<feature type="modified residue" description="N6-(pyridoxal phosphate)lysine" evidence="3">
    <location>
        <position position="157"/>
    </location>
</feature>
<feature type="sequence conflict" description="In Ref. 1; BAD06581." evidence="11" ref="1">
    <original>W</original>
    <variation>G</variation>
    <location>
        <position position="22"/>
    </location>
</feature>
<proteinExistence type="evidence at protein level"/>
<keyword id="KW-0017">Alkaloid metabolism</keyword>
<keyword id="KW-0150">Chloroplast</keyword>
<keyword id="KW-0210">Decarboxylase</keyword>
<keyword id="KW-0456">Lyase</keyword>
<keyword id="KW-0460">Magnesium</keyword>
<keyword id="KW-0934">Plastid</keyword>
<keyword id="KW-0663">Pyridoxal phosphate</keyword>
<keyword id="KW-1185">Reference proteome</keyword>
<keyword id="KW-0745">Spermidine biosynthesis</keyword>
<keyword id="KW-0809">Transit peptide</keyword>
<comment type="function">
    <text evidence="5 7">Involved in the biosynthesis of pyridine alkaloid natural products, leading mainly to the production of anabasine, anatabine, nicotine and nornicotine, effective deterrents against herbivores with antiparasitic and pesticide properties (neurotoxins); nornicotine serves as the precursor in the synthesis of the carcinogen compound N'-nitrosonornicotine (NNN) (PubMed:32242247). Required for the biosynthesis of putrescine (By similarity). Catalyzes the first step of polyamine (PA) biosynthesis to produce putrescine from arginine (By similarity).</text>
</comment>
<comment type="catalytic activity">
    <reaction evidence="5">
        <text>L-arginine + H(+) = agmatine + CO2</text>
        <dbReference type="Rhea" id="RHEA:17641"/>
        <dbReference type="ChEBI" id="CHEBI:15378"/>
        <dbReference type="ChEBI" id="CHEBI:16526"/>
        <dbReference type="ChEBI" id="CHEBI:32682"/>
        <dbReference type="ChEBI" id="CHEBI:58145"/>
        <dbReference type="EC" id="4.1.1.19"/>
    </reaction>
</comment>
<comment type="cofactor">
    <cofactor evidence="4">
        <name>Mg(2+)</name>
        <dbReference type="ChEBI" id="CHEBI:18420"/>
    </cofactor>
</comment>
<comment type="cofactor">
    <cofactor evidence="3">
        <name>pyridoxal 5'-phosphate</name>
        <dbReference type="ChEBI" id="CHEBI:597326"/>
    </cofactor>
</comment>
<comment type="pathway">
    <text evidence="7">Alkaloid biosynthesis; nicotine biosynthesis.</text>
</comment>
<comment type="pathway">
    <text evidence="5">Amine and polyamine biosynthesis; agmatine biosynthesis; agmatine from L-arginine: step 1/1.</text>
</comment>
<comment type="subunit">
    <text evidence="8">Interacts, via its C-terminal internal region, with the tobacco mosaic virus (TMV) replicase helicase region.</text>
</comment>
<comment type="subcellular location">
    <subcellularLocation>
        <location evidence="6">Plastid</location>
        <location evidence="6">Chloroplast</location>
    </subcellularLocation>
</comment>
<comment type="disruption phenotype">
    <text evidence="7">Reduced alkaloids and nicotin levels associated with a lower putrescine production (PubMed:32242247). Occasionally, an early senescence and a lower viability of the older leaves is observed (PubMed:32242247).</text>
</comment>
<comment type="similarity">
    <text evidence="11">Belongs to the Orn/Lys/Arg decarboxylase class-II family. SpeA subfamily.</text>
</comment>
<sequence length="733" mass="79045">MPALGCCVDAAVSPPPGYSFLWDSSLPAPEIFPSGVPPSTNTAVATTTTTHWSPAHSSALYSIDGWGAPYFTVNSSGDISVKPHGTDTLPHQEIDLLKVVKKASDPKNLGGLGLQFPLVVRFPDILKNRLESLQSVFDYAVQSQGYEAHYQGVYPVKCNQDRFVVEDIVKFGSGFRFGLEAGSKPELLLAMSCLCKGSHEGLLVCNGFKDAEYISLALVARKLMLNTVIVLEQEEELDLVIDISKKMAVRPVIGLRAKLRTKHSGHFGSTSGEKGKFGLTTTQIVRVVKKLEESGMLDCLQLLHFHIGSQIPSTALLADGVGEAAQIYCELVRLGAGMKYIDCGGGLGIDYDGTKSCDSDCSVGYGLQEYASTVVQAVRFVCDRKNVKHPVICSESGRAIVSHHSVLIFEAVSSTTTRSQELSSVDLQSFVEKLNDDARADYRNLSAAAIRGEYDTCVLYADQLKQRCVEQFKDGDLDIEQLAAVDGICDFVSKAIGASDPVRTYHVNLSIFTSVPDFWAIDQLFPIVPIHKLDERPVVRGILSDLTCDSDGKIDKFIGGESSLPLHELGSNGGGGGDGGKYYLGMFLGGAYEEALGGLHNLFGGPSVLRVSQSDSPHSFAVTCAVPGPSCADVLRAMQHEPELMFETLKHRAEEFVHNDDEQEEDKGLAFASLASSLAQSFNNMPYLVTNSSCCLTAAANNGGYYYCNDENIVGVGAESAAAEEELWPYCVA</sequence>
<protein>
    <recommendedName>
        <fullName evidence="9">Arginine decarboxylase 1A, chloroplastic</fullName>
        <ecNumber evidence="5">4.1.1.19</ecNumber>
    </recommendedName>
</protein>
<dbReference type="EC" id="4.1.1.19" evidence="5"/>
<dbReference type="EMBL" id="AB110952">
    <property type="protein sequence ID" value="BAD06581.1"/>
    <property type="molecule type" value="mRNA"/>
</dbReference>
<dbReference type="RefSeq" id="NP_001312119.1">
    <property type="nucleotide sequence ID" value="NM_001325190.1"/>
</dbReference>
<dbReference type="SMR" id="A0A1S3YCW2"/>
<dbReference type="STRING" id="4097.A0A1S3YCW2"/>
<dbReference type="PaxDb" id="4097-A0A1S3YCW2"/>
<dbReference type="GeneID" id="107774919"/>
<dbReference type="KEGG" id="nta:107774919"/>
<dbReference type="OMA" id="AITHAMP"/>
<dbReference type="OrthoDB" id="3717802at2759"/>
<dbReference type="UniPathway" id="UPA00107"/>
<dbReference type="UniPathway" id="UPA00186">
    <property type="reaction ID" value="UER00284"/>
</dbReference>
<dbReference type="Proteomes" id="UP000084051">
    <property type="component" value="Unplaced"/>
</dbReference>
<dbReference type="GO" id="GO:0009507">
    <property type="term" value="C:chloroplast"/>
    <property type="evidence" value="ECO:0007669"/>
    <property type="project" value="UniProtKB-SubCell"/>
</dbReference>
<dbReference type="GO" id="GO:0008792">
    <property type="term" value="F:arginine decarboxylase activity"/>
    <property type="evidence" value="ECO:0000318"/>
    <property type="project" value="GO_Central"/>
</dbReference>
<dbReference type="GO" id="GO:0009820">
    <property type="term" value="P:alkaloid metabolic process"/>
    <property type="evidence" value="ECO:0007669"/>
    <property type="project" value="UniProtKB-KW"/>
</dbReference>
<dbReference type="GO" id="GO:0006527">
    <property type="term" value="P:arginine catabolic process"/>
    <property type="evidence" value="ECO:0007669"/>
    <property type="project" value="InterPro"/>
</dbReference>
<dbReference type="GO" id="GO:0042179">
    <property type="term" value="P:nicotine biosynthetic process"/>
    <property type="evidence" value="ECO:0007669"/>
    <property type="project" value="UniProtKB-UniPathway"/>
</dbReference>
<dbReference type="GO" id="GO:0008295">
    <property type="term" value="P:spermidine biosynthetic process"/>
    <property type="evidence" value="ECO:0007669"/>
    <property type="project" value="UniProtKB-KW"/>
</dbReference>
<dbReference type="CDD" id="cd06830">
    <property type="entry name" value="PLPDE_III_ADC"/>
    <property type="match status" value="1"/>
</dbReference>
<dbReference type="FunFam" id="1.20.58.930:FF:000003">
    <property type="entry name" value="Arginine decarboxylase"/>
    <property type="match status" value="1"/>
</dbReference>
<dbReference type="FunFam" id="3.20.20.10:FF:000001">
    <property type="entry name" value="Biosynthetic arginine decarboxylase"/>
    <property type="match status" value="1"/>
</dbReference>
<dbReference type="Gene3D" id="1.20.58.930">
    <property type="match status" value="1"/>
</dbReference>
<dbReference type="Gene3D" id="3.20.20.10">
    <property type="entry name" value="Alanine racemase"/>
    <property type="match status" value="1"/>
</dbReference>
<dbReference type="Gene3D" id="2.40.37.10">
    <property type="entry name" value="Lyase, Ornithine Decarboxylase, Chain A, domain 1"/>
    <property type="match status" value="1"/>
</dbReference>
<dbReference type="InterPro" id="IPR009006">
    <property type="entry name" value="Ala_racemase/Decarboxylase_C"/>
</dbReference>
<dbReference type="InterPro" id="IPR002985">
    <property type="entry name" value="Arg_decrbxlase"/>
</dbReference>
<dbReference type="InterPro" id="IPR022657">
    <property type="entry name" value="De-COase2_CS"/>
</dbReference>
<dbReference type="InterPro" id="IPR022644">
    <property type="entry name" value="De-COase2_N"/>
</dbReference>
<dbReference type="InterPro" id="IPR022653">
    <property type="entry name" value="De-COase2_pyr-phos_BS"/>
</dbReference>
<dbReference type="InterPro" id="IPR000183">
    <property type="entry name" value="Orn/DAP/Arg_de-COase"/>
</dbReference>
<dbReference type="InterPro" id="IPR029066">
    <property type="entry name" value="PLP-binding_barrel"/>
</dbReference>
<dbReference type="NCBIfam" id="NF003763">
    <property type="entry name" value="PRK05354.1"/>
    <property type="match status" value="1"/>
</dbReference>
<dbReference type="NCBIfam" id="TIGR01273">
    <property type="entry name" value="speA"/>
    <property type="match status" value="1"/>
</dbReference>
<dbReference type="PANTHER" id="PTHR43295">
    <property type="entry name" value="ARGININE DECARBOXYLASE"/>
    <property type="match status" value="1"/>
</dbReference>
<dbReference type="PANTHER" id="PTHR43295:SF1">
    <property type="entry name" value="ARGININE DECARBOXYLASE 1, CHLOROPLASTIC-RELATED"/>
    <property type="match status" value="1"/>
</dbReference>
<dbReference type="Pfam" id="PF02784">
    <property type="entry name" value="Orn_Arg_deC_N"/>
    <property type="match status" value="1"/>
</dbReference>
<dbReference type="PIRSF" id="PIRSF001336">
    <property type="entry name" value="Arg_decrbxlase"/>
    <property type="match status" value="1"/>
</dbReference>
<dbReference type="PRINTS" id="PR01180">
    <property type="entry name" value="ARGDCRBXLASE"/>
</dbReference>
<dbReference type="PRINTS" id="PR01179">
    <property type="entry name" value="ODADCRBXLASE"/>
</dbReference>
<dbReference type="SUPFAM" id="SSF51419">
    <property type="entry name" value="PLP-binding barrel"/>
    <property type="match status" value="1"/>
</dbReference>
<dbReference type="PROSITE" id="PS00878">
    <property type="entry name" value="ODR_DC_2_1"/>
    <property type="match status" value="1"/>
</dbReference>
<dbReference type="PROSITE" id="PS00879">
    <property type="entry name" value="ODR_DC_2_2"/>
    <property type="match status" value="1"/>
</dbReference>
<organism>
    <name type="scientific">Nicotiana tabacum</name>
    <name type="common">Common tobacco</name>
    <dbReference type="NCBI Taxonomy" id="4097"/>
    <lineage>
        <taxon>Eukaryota</taxon>
        <taxon>Viridiplantae</taxon>
        <taxon>Streptophyta</taxon>
        <taxon>Embryophyta</taxon>
        <taxon>Tracheophyta</taxon>
        <taxon>Spermatophyta</taxon>
        <taxon>Magnoliopsida</taxon>
        <taxon>eudicotyledons</taxon>
        <taxon>Gunneridae</taxon>
        <taxon>Pentapetalae</taxon>
        <taxon>asterids</taxon>
        <taxon>lamiids</taxon>
        <taxon>Solanales</taxon>
        <taxon>Solanaceae</taxon>
        <taxon>Nicotianoideae</taxon>
        <taxon>Nicotianeae</taxon>
        <taxon>Nicotiana</taxon>
    </lineage>
</organism>
<accession>A0A1S3YCW2</accession>
<accession>Q76BK9</accession>
<evidence type="ECO:0000250" key="1">
    <source>
        <dbReference type="UniProtKB" id="P00860"/>
    </source>
</evidence>
<evidence type="ECO:0000250" key="2">
    <source>
        <dbReference type="UniProtKB" id="P07805"/>
    </source>
</evidence>
<evidence type="ECO:0000250" key="3">
    <source>
        <dbReference type="UniProtKB" id="P11926"/>
    </source>
</evidence>
<evidence type="ECO:0000250" key="4">
    <source>
        <dbReference type="UniProtKB" id="P21170"/>
    </source>
</evidence>
<evidence type="ECO:0000250" key="5">
    <source>
        <dbReference type="UniProtKB" id="Q9SI64"/>
    </source>
</evidence>
<evidence type="ECO:0000255" key="6"/>
<evidence type="ECO:0000269" key="7">
    <source>
    </source>
</evidence>
<evidence type="ECO:0000269" key="8">
    <source ref="1"/>
</evidence>
<evidence type="ECO:0000303" key="9">
    <source>
    </source>
</evidence>
<evidence type="ECO:0000303" key="10">
    <source ref="1"/>
</evidence>
<evidence type="ECO:0000305" key="11"/>
<gene>
    <name evidence="9" type="primary">ADC1A</name>
    <name evidence="10" type="synonym">ADC</name>
    <name type="ORF">LOC107774919</name>
</gene>
<reference key="1">
    <citation type="journal article" date="2004" name="J. Gen. Plant Pathol.">
        <title>Interaction between the helicase domain of the tobacco mosaic virus replicase and a tobacco arginine decarboxylase.</title>
        <authorList>
            <person name="Shimizu T."/>
            <person name="Yamaji Y."/>
            <person name="Ogasawara Y."/>
            <person name="Hamada K."/>
            <person name="Sakurai K."/>
            <person name="Kobayashi T."/>
            <person name="Watanabe T."/>
            <person name="Hibi T."/>
        </authorList>
    </citation>
    <scope>NUCLEOTIDE SEQUENCE [MRNA]</scope>
    <scope>INTERACTION WITH TMV REPLICASE</scope>
    <source>
        <strain>cv. Xanthi</strain>
        <tissue>Leaf</tissue>
    </source>
</reference>
<reference key="2">
    <citation type="journal article" date="2014" name="Nat. Commun.">
        <title>The tobacco genome sequence and its comparison with those of tomato and potato.</title>
        <authorList>
            <person name="Sierro N."/>
            <person name="Battey J.N."/>
            <person name="Ouadi S."/>
            <person name="Bakaher N."/>
            <person name="Bovet L."/>
            <person name="Willig A."/>
            <person name="Goepfert S."/>
            <person name="Peitsch M.C."/>
            <person name="Ivanov N.V."/>
        </authorList>
    </citation>
    <scope>NUCLEOTIDE SEQUENCE [LARGE SCALE GENOMIC DNA]</scope>
    <source>
        <strain>cv. TN90</strain>
    </source>
</reference>
<reference key="3">
    <citation type="journal article" date="2020" name="Planta">
        <title>Genetic attenuation of alkaloids and nicotine content in tobacco (Nicotiana tabacum).</title>
        <authorList>
            <person name="Hidalgo Martinez D."/>
            <person name="Payyavula R.S."/>
            <person name="Kudithipudi C."/>
            <person name="Shen Y."/>
            <person name="Xu D."/>
            <person name="Warek U."/>
            <person name="Strickland J.A."/>
            <person name="Melis A."/>
        </authorList>
    </citation>
    <scope>FUNCTION</scope>
    <scope>DISRUPTION PHENOTYPE</scope>
    <scope>PATHWAY</scope>
    <source>
        <strain>cv. K326-ALCS3</strain>
    </source>
</reference>